<organism>
    <name type="scientific">Streptococcus pyogenes serotype M2 (strain MGAS10270)</name>
    <dbReference type="NCBI Taxonomy" id="370552"/>
    <lineage>
        <taxon>Bacteria</taxon>
        <taxon>Bacillati</taxon>
        <taxon>Bacillota</taxon>
        <taxon>Bacilli</taxon>
        <taxon>Lactobacillales</taxon>
        <taxon>Streptococcaceae</taxon>
        <taxon>Streptococcus</taxon>
    </lineage>
</organism>
<name>IF3_STRPD</name>
<reference key="1">
    <citation type="journal article" date="2006" name="Proc. Natl. Acad. Sci. U.S.A.">
        <title>Molecular genetic anatomy of inter- and intraserotype variation in the human bacterial pathogen group A Streptococcus.</title>
        <authorList>
            <person name="Beres S.B."/>
            <person name="Richter E.W."/>
            <person name="Nagiec M.J."/>
            <person name="Sumby P."/>
            <person name="Porcella S.F."/>
            <person name="DeLeo F.R."/>
            <person name="Musser J.M."/>
        </authorList>
    </citation>
    <scope>NUCLEOTIDE SEQUENCE [LARGE SCALE GENOMIC DNA]</scope>
    <source>
        <strain>MGAS10270</strain>
    </source>
</reference>
<feature type="chain" id="PRO_1000004574" description="Translation initiation factor IF-3">
    <location>
        <begin position="1"/>
        <end position="176"/>
    </location>
</feature>
<accession>Q1JHJ7</accession>
<comment type="function">
    <text evidence="1">IF-3 binds to the 30S ribosomal subunit and shifts the equilibrium between 70S ribosomes and their 50S and 30S subunits in favor of the free subunits, thus enhancing the availability of 30S subunits on which protein synthesis initiation begins.</text>
</comment>
<comment type="subunit">
    <text evidence="1">Monomer.</text>
</comment>
<comment type="subcellular location">
    <subcellularLocation>
        <location evidence="1">Cytoplasm</location>
    </subcellularLocation>
</comment>
<comment type="similarity">
    <text evidence="1">Belongs to the IF-3 family.</text>
</comment>
<gene>
    <name evidence="1" type="primary">infC</name>
    <name type="ordered locus">MGAS10270_Spy0674</name>
</gene>
<evidence type="ECO:0000255" key="1">
    <source>
        <dbReference type="HAMAP-Rule" id="MF_00080"/>
    </source>
</evidence>
<proteinExistence type="inferred from homology"/>
<dbReference type="EMBL" id="CP000260">
    <property type="protein sequence ID" value="ABF33739.1"/>
    <property type="molecule type" value="Genomic_DNA"/>
</dbReference>
<dbReference type="RefSeq" id="WP_002985152.1">
    <property type="nucleotide sequence ID" value="NZ_CVUH01000002.1"/>
</dbReference>
<dbReference type="SMR" id="Q1JHJ7"/>
<dbReference type="GeneID" id="69901077"/>
<dbReference type="KEGG" id="sph:MGAS10270_Spy0674"/>
<dbReference type="HOGENOM" id="CLU_054919_3_2_9"/>
<dbReference type="Proteomes" id="UP000002436">
    <property type="component" value="Chromosome"/>
</dbReference>
<dbReference type="GO" id="GO:0005829">
    <property type="term" value="C:cytosol"/>
    <property type="evidence" value="ECO:0007669"/>
    <property type="project" value="TreeGrafter"/>
</dbReference>
<dbReference type="GO" id="GO:0016020">
    <property type="term" value="C:membrane"/>
    <property type="evidence" value="ECO:0007669"/>
    <property type="project" value="TreeGrafter"/>
</dbReference>
<dbReference type="GO" id="GO:0043022">
    <property type="term" value="F:ribosome binding"/>
    <property type="evidence" value="ECO:0007669"/>
    <property type="project" value="TreeGrafter"/>
</dbReference>
<dbReference type="GO" id="GO:0003743">
    <property type="term" value="F:translation initiation factor activity"/>
    <property type="evidence" value="ECO:0007669"/>
    <property type="project" value="UniProtKB-UniRule"/>
</dbReference>
<dbReference type="GO" id="GO:0032790">
    <property type="term" value="P:ribosome disassembly"/>
    <property type="evidence" value="ECO:0007669"/>
    <property type="project" value="TreeGrafter"/>
</dbReference>
<dbReference type="FunFam" id="3.10.20.80:FF:000001">
    <property type="entry name" value="Translation initiation factor IF-3"/>
    <property type="match status" value="1"/>
</dbReference>
<dbReference type="FunFam" id="3.30.110.10:FF:000001">
    <property type="entry name" value="Translation initiation factor IF-3"/>
    <property type="match status" value="1"/>
</dbReference>
<dbReference type="Gene3D" id="3.30.110.10">
    <property type="entry name" value="Translation initiation factor 3 (IF-3), C-terminal domain"/>
    <property type="match status" value="1"/>
</dbReference>
<dbReference type="Gene3D" id="3.10.20.80">
    <property type="entry name" value="Translation initiation factor 3 (IF-3), N-terminal domain"/>
    <property type="match status" value="1"/>
</dbReference>
<dbReference type="HAMAP" id="MF_00080">
    <property type="entry name" value="IF_3"/>
    <property type="match status" value="1"/>
</dbReference>
<dbReference type="InterPro" id="IPR036788">
    <property type="entry name" value="T_IF-3_C_sf"/>
</dbReference>
<dbReference type="InterPro" id="IPR036787">
    <property type="entry name" value="T_IF-3_N_sf"/>
</dbReference>
<dbReference type="InterPro" id="IPR019813">
    <property type="entry name" value="Translation_initiation_fac3_CS"/>
</dbReference>
<dbReference type="InterPro" id="IPR001288">
    <property type="entry name" value="Translation_initiation_fac_3"/>
</dbReference>
<dbReference type="InterPro" id="IPR019815">
    <property type="entry name" value="Translation_initiation_fac_3_C"/>
</dbReference>
<dbReference type="InterPro" id="IPR019814">
    <property type="entry name" value="Translation_initiation_fac_3_N"/>
</dbReference>
<dbReference type="NCBIfam" id="TIGR00168">
    <property type="entry name" value="infC"/>
    <property type="match status" value="1"/>
</dbReference>
<dbReference type="PANTHER" id="PTHR10938">
    <property type="entry name" value="TRANSLATION INITIATION FACTOR IF-3"/>
    <property type="match status" value="1"/>
</dbReference>
<dbReference type="PANTHER" id="PTHR10938:SF0">
    <property type="entry name" value="TRANSLATION INITIATION FACTOR IF-3, MITOCHONDRIAL"/>
    <property type="match status" value="1"/>
</dbReference>
<dbReference type="Pfam" id="PF00707">
    <property type="entry name" value="IF3_C"/>
    <property type="match status" value="1"/>
</dbReference>
<dbReference type="Pfam" id="PF05198">
    <property type="entry name" value="IF3_N"/>
    <property type="match status" value="1"/>
</dbReference>
<dbReference type="SUPFAM" id="SSF55200">
    <property type="entry name" value="Translation initiation factor IF3, C-terminal domain"/>
    <property type="match status" value="1"/>
</dbReference>
<dbReference type="SUPFAM" id="SSF54364">
    <property type="entry name" value="Translation initiation factor IF3, N-terminal domain"/>
    <property type="match status" value="1"/>
</dbReference>
<dbReference type="PROSITE" id="PS00938">
    <property type="entry name" value="IF3"/>
    <property type="match status" value="1"/>
</dbReference>
<protein>
    <recommendedName>
        <fullName evidence="1">Translation initiation factor IF-3</fullName>
    </recommendedName>
</protein>
<keyword id="KW-0963">Cytoplasm</keyword>
<keyword id="KW-0396">Initiation factor</keyword>
<keyword id="KW-0648">Protein biosynthesis</keyword>
<sequence length="176" mass="20054">MKIIAKKDLFINDEIRVREVRLVGLEGEQLGIKPLSEAQSLADASNVDLVLIQPQAVPPVAKLMDYGKFKFEYQKKQKEQRKKQSVVTVKEVRLSPVIDKGDFETKLRNGRKFLEKGNKVKVSIRFKGRMITHKEIGAKVLADFAEATQDIAIIEQRAKMDGRQMFMQLAPISDKK</sequence>